<accession>Q96Y22</accession>
<name>HTPX2_SULTO</name>
<proteinExistence type="inferred from homology"/>
<keyword id="KW-1003">Cell membrane</keyword>
<keyword id="KW-0378">Hydrolase</keyword>
<keyword id="KW-0472">Membrane</keyword>
<keyword id="KW-0479">Metal-binding</keyword>
<keyword id="KW-0482">Metalloprotease</keyword>
<keyword id="KW-0645">Protease</keyword>
<keyword id="KW-1185">Reference proteome</keyword>
<keyword id="KW-0812">Transmembrane</keyword>
<keyword id="KW-1133">Transmembrane helix</keyword>
<keyword id="KW-0862">Zinc</keyword>
<dbReference type="EC" id="3.4.24.-" evidence="1"/>
<dbReference type="EMBL" id="BA000023">
    <property type="protein sequence ID" value="BAB67455.1"/>
    <property type="molecule type" value="Genomic_DNA"/>
</dbReference>
<dbReference type="RefSeq" id="WP_010980430.1">
    <property type="nucleotide sequence ID" value="NC_003106.2"/>
</dbReference>
<dbReference type="STRING" id="273063.STK_23460"/>
<dbReference type="GeneID" id="1460428"/>
<dbReference type="KEGG" id="sto:STK_23460"/>
<dbReference type="PATRIC" id="fig|273063.9.peg.2650"/>
<dbReference type="eggNOG" id="arCOG01331">
    <property type="taxonomic scope" value="Archaea"/>
</dbReference>
<dbReference type="OrthoDB" id="28389at2157"/>
<dbReference type="Proteomes" id="UP000001015">
    <property type="component" value="Chromosome"/>
</dbReference>
<dbReference type="GO" id="GO:0005886">
    <property type="term" value="C:plasma membrane"/>
    <property type="evidence" value="ECO:0007669"/>
    <property type="project" value="UniProtKB-SubCell"/>
</dbReference>
<dbReference type="GO" id="GO:0004222">
    <property type="term" value="F:metalloendopeptidase activity"/>
    <property type="evidence" value="ECO:0007669"/>
    <property type="project" value="UniProtKB-UniRule"/>
</dbReference>
<dbReference type="GO" id="GO:0008270">
    <property type="term" value="F:zinc ion binding"/>
    <property type="evidence" value="ECO:0007669"/>
    <property type="project" value="UniProtKB-UniRule"/>
</dbReference>
<dbReference type="GO" id="GO:0006508">
    <property type="term" value="P:proteolysis"/>
    <property type="evidence" value="ECO:0007669"/>
    <property type="project" value="UniProtKB-KW"/>
</dbReference>
<dbReference type="CDD" id="cd07338">
    <property type="entry name" value="M48B_HtpX_like"/>
    <property type="match status" value="1"/>
</dbReference>
<dbReference type="Gene3D" id="3.30.2010.10">
    <property type="entry name" value="Metalloproteases ('zincins'), catalytic domain"/>
    <property type="match status" value="1"/>
</dbReference>
<dbReference type="HAMAP" id="MF_00188">
    <property type="entry name" value="Pept_M48_protease_HtpX"/>
    <property type="match status" value="1"/>
</dbReference>
<dbReference type="InterPro" id="IPR050083">
    <property type="entry name" value="HtpX_protease"/>
</dbReference>
<dbReference type="InterPro" id="IPR022919">
    <property type="entry name" value="Pept_M48_protease_HtpX"/>
</dbReference>
<dbReference type="InterPro" id="IPR001915">
    <property type="entry name" value="Peptidase_M48"/>
</dbReference>
<dbReference type="NCBIfam" id="NF002322">
    <property type="entry name" value="PRK01265.1"/>
    <property type="match status" value="1"/>
</dbReference>
<dbReference type="PANTHER" id="PTHR43221">
    <property type="entry name" value="PROTEASE HTPX"/>
    <property type="match status" value="1"/>
</dbReference>
<dbReference type="PANTHER" id="PTHR43221:SF2">
    <property type="entry name" value="PROTEASE HTPX HOMOLOG"/>
    <property type="match status" value="1"/>
</dbReference>
<dbReference type="Pfam" id="PF01435">
    <property type="entry name" value="Peptidase_M48"/>
    <property type="match status" value="1"/>
</dbReference>
<protein>
    <recommendedName>
        <fullName evidence="1">Protease HtpX homolog 2</fullName>
        <ecNumber evidence="1">3.4.24.-</ecNumber>
    </recommendedName>
</protein>
<organism>
    <name type="scientific">Sulfurisphaera tokodaii (strain DSM 16993 / JCM 10545 / NBRC 100140 / 7)</name>
    <name type="common">Sulfolobus tokodaii</name>
    <dbReference type="NCBI Taxonomy" id="273063"/>
    <lineage>
        <taxon>Archaea</taxon>
        <taxon>Thermoproteota</taxon>
        <taxon>Thermoprotei</taxon>
        <taxon>Sulfolobales</taxon>
        <taxon>Sulfolobaceae</taxon>
        <taxon>Sulfurisphaera</taxon>
    </lineage>
</organism>
<comment type="cofactor">
    <cofactor evidence="1">
        <name>Zn(2+)</name>
        <dbReference type="ChEBI" id="CHEBI:29105"/>
    </cofactor>
    <text evidence="1">Binds 1 zinc ion per subunit.</text>
</comment>
<comment type="subcellular location">
    <subcellularLocation>
        <location evidence="1">Cell membrane</location>
        <topology evidence="1">Multi-pass membrane protein</topology>
    </subcellularLocation>
</comment>
<comment type="similarity">
    <text evidence="1">Belongs to the peptidase M48B family.</text>
</comment>
<feature type="chain" id="PRO_0000138933" description="Protease HtpX homolog 2">
    <location>
        <begin position="1"/>
        <end position="325"/>
    </location>
</feature>
<feature type="transmembrane region" description="Helical" evidence="1">
    <location>
        <begin position="17"/>
        <end position="37"/>
    </location>
</feature>
<feature type="transmembrane region" description="Helical" evidence="1">
    <location>
        <begin position="42"/>
        <end position="62"/>
    </location>
</feature>
<feature type="transmembrane region" description="Helical" evidence="1">
    <location>
        <begin position="158"/>
        <end position="178"/>
    </location>
</feature>
<feature type="transmembrane region" description="Helical" evidence="1">
    <location>
        <begin position="195"/>
        <end position="215"/>
    </location>
</feature>
<feature type="active site" evidence="1">
    <location>
        <position position="147"/>
    </location>
</feature>
<feature type="binding site" evidence="1">
    <location>
        <position position="146"/>
    </location>
    <ligand>
        <name>Zn(2+)</name>
        <dbReference type="ChEBI" id="CHEBI:29105"/>
        <note>catalytic</note>
    </ligand>
</feature>
<feature type="binding site" evidence="1">
    <location>
        <position position="150"/>
    </location>
    <ligand>
        <name>Zn(2+)</name>
        <dbReference type="ChEBI" id="CHEBI:29105"/>
        <note>catalytic</note>
    </ligand>
</feature>
<feature type="binding site" evidence="1">
    <location>
        <position position="222"/>
    </location>
    <ligand>
        <name>Zn(2+)</name>
        <dbReference type="ChEBI" id="CHEBI:29105"/>
        <note>catalytic</note>
    </ligand>
</feature>
<gene>
    <name evidence="1" type="primary">htpX2</name>
    <name type="ordered locus">STK_23460</name>
</gene>
<reference key="1">
    <citation type="journal article" date="2001" name="DNA Res.">
        <title>Complete genome sequence of an aerobic thermoacidophilic Crenarchaeon, Sulfolobus tokodaii strain7.</title>
        <authorList>
            <person name="Kawarabayasi Y."/>
            <person name="Hino Y."/>
            <person name="Horikawa H."/>
            <person name="Jin-no K."/>
            <person name="Takahashi M."/>
            <person name="Sekine M."/>
            <person name="Baba S."/>
            <person name="Ankai A."/>
            <person name="Kosugi H."/>
            <person name="Hosoyama A."/>
            <person name="Fukui S."/>
            <person name="Nagai Y."/>
            <person name="Nishijima K."/>
            <person name="Otsuka R."/>
            <person name="Nakazawa H."/>
            <person name="Takamiya M."/>
            <person name="Kato Y."/>
            <person name="Yoshizawa T."/>
            <person name="Tanaka T."/>
            <person name="Kudoh Y."/>
            <person name="Yamazaki J."/>
            <person name="Kushida N."/>
            <person name="Oguchi A."/>
            <person name="Aoki K."/>
            <person name="Masuda S."/>
            <person name="Yanagii M."/>
            <person name="Nishimura M."/>
            <person name="Yamagishi A."/>
            <person name="Oshima T."/>
            <person name="Kikuchi H."/>
        </authorList>
    </citation>
    <scope>NUCLEOTIDE SEQUENCE [LARGE SCALE GENOMIC DNA]</scope>
    <source>
        <strain>DSM 16993 / JCM 10545 / NBRC 100140 / 7</strain>
    </source>
</reference>
<evidence type="ECO:0000255" key="1">
    <source>
        <dbReference type="HAMAP-Rule" id="MF_00188"/>
    </source>
</evidence>
<sequence>MIWEVTKLRISMILSAIAILVLGFALIYGILGYFFGFSNAPLLITGALAFVTIFTILQWLFGPALIKSIYHLTEVDPTDPQYGWVYNLVQEVAMYNRMNTPKVYIANVPFPNAFAFESPIYGKNMAITLPLLRMLTPEEVKAVIGHEIGHLRHKDTELLLAVGLIPTLLYWIGYGLWWGGLLGGGGGGRNDNSGILFLIGIALIAFSFLFNLFVLFLNRMREAYADVNSAITVPNGAKNLQTALAKIVLSTDPDIIERYKKKYGQIGSMLLFSGFQINEDIPAYKVQELVEYWRNIKVSPFADIFSDHPHPAKRIQLLEKLTHTQ</sequence>